<organism>
    <name type="scientific">Arabidopsis thaliana</name>
    <name type="common">Mouse-ear cress</name>
    <dbReference type="NCBI Taxonomy" id="3702"/>
    <lineage>
        <taxon>Eukaryota</taxon>
        <taxon>Viridiplantae</taxon>
        <taxon>Streptophyta</taxon>
        <taxon>Embryophyta</taxon>
        <taxon>Tracheophyta</taxon>
        <taxon>Spermatophyta</taxon>
        <taxon>Magnoliopsida</taxon>
        <taxon>eudicotyledons</taxon>
        <taxon>Gunneridae</taxon>
        <taxon>Pentapetalae</taxon>
        <taxon>rosids</taxon>
        <taxon>malvids</taxon>
        <taxon>Brassicales</taxon>
        <taxon>Brassicaceae</taxon>
        <taxon>Camelineae</taxon>
        <taxon>Arabidopsis</taxon>
    </lineage>
</organism>
<name>BH071_ARATH</name>
<keyword id="KW-0217">Developmental protein</keyword>
<keyword id="KW-0238">DNA-binding</keyword>
<keyword id="KW-0539">Nucleus</keyword>
<keyword id="KW-1185">Reference proteome</keyword>
<keyword id="KW-0804">Transcription</keyword>
<keyword id="KW-0805">Transcription regulation</keyword>
<proteinExistence type="evidence at protein level"/>
<gene>
    <name type="primary">BHLH71</name>
    <name type="synonym">EN17</name>
    <name type="ordered locus">At5g46690</name>
    <name type="ORF">MZA15.10</name>
</gene>
<comment type="function">
    <text evidence="4">Transcription factor. May be involved in the differentiation of stomatal guard cells.</text>
</comment>
<comment type="subunit">
    <text evidence="4 5">Homodimer (Probable). Interacts with FAMA.</text>
</comment>
<comment type="interaction">
    <interactant intactId="EBI-4432361">
        <id>Q56XR0</id>
    </interactant>
    <interactant intactId="EBI-1640543">
        <id>Q0V7X4</id>
        <label>FIT</label>
    </interactant>
    <organismsDiffer>false</organismsDiffer>
    <experiments>3</experiments>
</comment>
<comment type="subcellular location">
    <subcellularLocation>
        <location evidence="5">Nucleus</location>
    </subcellularLocation>
</comment>
<comment type="tissue specificity">
    <text evidence="3 4">Expressed in leaves, stems, and flowers.</text>
</comment>
<comment type="sequence caution" evidence="5">
    <conflict type="erroneous gene model prediction">
        <sequence resource="EMBL-CDS" id="BAB08913"/>
    </conflict>
</comment>
<evidence type="ECO:0000255" key="1">
    <source>
        <dbReference type="PROSITE-ProRule" id="PRU00981"/>
    </source>
</evidence>
<evidence type="ECO:0000256" key="2">
    <source>
        <dbReference type="SAM" id="MobiDB-lite"/>
    </source>
</evidence>
<evidence type="ECO:0000269" key="3">
    <source>
    </source>
</evidence>
<evidence type="ECO:0000269" key="4">
    <source>
    </source>
</evidence>
<evidence type="ECO:0000305" key="5"/>
<reference key="1">
    <citation type="journal article" date="1998" name="DNA Res.">
        <title>Structural analysis of Arabidopsis thaliana chromosome 5. VIII. Sequence features of the regions of 1,081,958 bp covered by seventeen physically assigned P1 and TAC clones.</title>
        <authorList>
            <person name="Asamizu E."/>
            <person name="Sato S."/>
            <person name="Kaneko T."/>
            <person name="Nakamura Y."/>
            <person name="Kotani H."/>
            <person name="Miyajima N."/>
            <person name="Tabata S."/>
        </authorList>
    </citation>
    <scope>NUCLEOTIDE SEQUENCE [LARGE SCALE GENOMIC DNA]</scope>
    <source>
        <strain>cv. Columbia</strain>
    </source>
</reference>
<reference key="2">
    <citation type="journal article" date="2017" name="Plant J.">
        <title>Araport11: a complete reannotation of the Arabidopsis thaliana reference genome.</title>
        <authorList>
            <person name="Cheng C.Y."/>
            <person name="Krishnakumar V."/>
            <person name="Chan A.P."/>
            <person name="Thibaud-Nissen F."/>
            <person name="Schobel S."/>
            <person name="Town C.D."/>
        </authorList>
    </citation>
    <scope>GENOME REANNOTATION</scope>
    <source>
        <strain>cv. Columbia</strain>
    </source>
</reference>
<reference key="3">
    <citation type="submission" date="2005-03" db="EMBL/GenBank/DDBJ databases">
        <title>Large-scale analysis of RIKEN Arabidopsis full-length (RAFL) cDNAs.</title>
        <authorList>
            <person name="Totoki Y."/>
            <person name="Seki M."/>
            <person name="Ishida J."/>
            <person name="Nakajima M."/>
            <person name="Enju A."/>
            <person name="Kamiya A."/>
            <person name="Narusaka M."/>
            <person name="Shin-i T."/>
            <person name="Nakagawa M."/>
            <person name="Sakamoto N."/>
            <person name="Oishi K."/>
            <person name="Kohara Y."/>
            <person name="Kobayashi M."/>
            <person name="Toyoda A."/>
            <person name="Sakaki Y."/>
            <person name="Sakurai T."/>
            <person name="Iida K."/>
            <person name="Akiyama K."/>
            <person name="Satou M."/>
            <person name="Toyoda T."/>
            <person name="Konagaya A."/>
            <person name="Carninci P."/>
            <person name="Kawai J."/>
            <person name="Hayashizaki Y."/>
            <person name="Shinozaki K."/>
        </authorList>
    </citation>
    <scope>NUCLEOTIDE SEQUENCE [LARGE SCALE MRNA]</scope>
    <source>
        <strain>cv. Columbia</strain>
    </source>
</reference>
<reference key="4">
    <citation type="submission" date="2006-06" db="EMBL/GenBank/DDBJ databases">
        <title>Arabidopsis ORF clones.</title>
        <authorList>
            <person name="Shinn P."/>
            <person name="Chen H."/>
            <person name="Kim C.J."/>
            <person name="Quinitio C."/>
            <person name="Ecker J.R."/>
        </authorList>
    </citation>
    <scope>NUCLEOTIDE SEQUENCE [LARGE SCALE MRNA]</scope>
    <source>
        <strain>cv. Columbia</strain>
    </source>
</reference>
<reference key="5">
    <citation type="submission" date="2002-03" db="EMBL/GenBank/DDBJ databases">
        <title>Full-length cDNA from Arabidopsis thaliana.</title>
        <authorList>
            <person name="Brover V.V."/>
            <person name="Troukhan M.E."/>
            <person name="Alexandrov N.A."/>
            <person name="Lu Y.-P."/>
            <person name="Flavell R.B."/>
            <person name="Feldmann K.A."/>
        </authorList>
    </citation>
    <scope>NUCLEOTIDE SEQUENCE [LARGE SCALE MRNA]</scope>
</reference>
<reference key="6">
    <citation type="journal article" date="2003" name="Mol. Biol. Evol.">
        <title>The basic helix-loop-helix transcription factor family in plants: a genome-wide study of protein structure and functional diversity.</title>
        <authorList>
            <person name="Heim M.A."/>
            <person name="Jakoby M."/>
            <person name="Werber M."/>
            <person name="Martin C."/>
            <person name="Weisshaar B."/>
            <person name="Bailey P.C."/>
        </authorList>
    </citation>
    <scope>NUCLEOTIDE SEQUENCE [MRNA] OF 121-327</scope>
    <scope>TISSUE SPECIFICITY</scope>
    <scope>GENE FAMILY</scope>
    <scope>NOMENCLATURE</scope>
    <source>
        <strain>cv. Columbia</strain>
        <tissue>Flower</tissue>
    </source>
</reference>
<reference key="7">
    <citation type="journal article" date="2003" name="Plant Cell">
        <title>The Arabidopsis basic/helix-loop-helix transcription factor family.</title>
        <authorList>
            <person name="Toledo-Ortiz G."/>
            <person name="Huq E."/>
            <person name="Quail P.H."/>
        </authorList>
    </citation>
    <scope>GENE FAMILY</scope>
</reference>
<reference key="8">
    <citation type="journal article" date="2003" name="Plant Cell">
        <title>Update on the basic helix-loop-helix transcription factor gene family in Arabidopsis thaliana.</title>
        <authorList>
            <person name="Bailey P.C."/>
            <person name="Martin C."/>
            <person name="Toledo-Ortiz G."/>
            <person name="Quail P.H."/>
            <person name="Huq E."/>
            <person name="Heim M.A."/>
            <person name="Jakoby M."/>
            <person name="Werber M."/>
            <person name="Weisshaar B."/>
        </authorList>
    </citation>
    <scope>GENE FAMILY</scope>
    <scope>NOMENCLATURE</scope>
</reference>
<reference key="9">
    <citation type="journal article" date="2006" name="Plant Cell">
        <title>Arabidopsis FAMA controls the final proliferation/differentiation switch during stomatal development.</title>
        <authorList>
            <person name="Ohashi-Ito K."/>
            <person name="Bergmann D.C."/>
        </authorList>
    </citation>
    <scope>FUNCTION</scope>
    <scope>INTERACTION WITH FAMA</scope>
    <scope>TISSUE SPECIFICITY</scope>
</reference>
<feature type="chain" id="PRO_0000358765" description="Transcription factor bHLH71">
    <location>
        <begin position="1"/>
        <end position="327"/>
    </location>
</feature>
<feature type="domain" description="bHLH" evidence="1">
    <location>
        <begin position="85"/>
        <end position="136"/>
    </location>
</feature>
<feature type="region of interest" description="Disordered" evidence="2">
    <location>
        <begin position="46"/>
        <end position="88"/>
    </location>
</feature>
<feature type="region of interest" description="Disordered" evidence="2">
    <location>
        <begin position="151"/>
        <end position="176"/>
    </location>
</feature>
<feature type="compositionally biased region" description="Basic residues" evidence="2">
    <location>
        <begin position="65"/>
        <end position="76"/>
    </location>
</feature>
<feature type="compositionally biased region" description="Basic and acidic residues" evidence="2">
    <location>
        <begin position="77"/>
        <end position="88"/>
    </location>
</feature>
<feature type="compositionally biased region" description="Polar residues" evidence="2">
    <location>
        <begin position="152"/>
        <end position="169"/>
    </location>
</feature>
<feature type="sequence conflict" description="In Ref. 5; AAM65023." evidence="5" ref="5">
    <original>N</original>
    <variation>H</variation>
    <location>
        <position position="51"/>
    </location>
</feature>
<feature type="sequence conflict" description="In Ref. 5; AAM65023." evidence="5" ref="5">
    <original>R</original>
    <variation>Q</variation>
    <location>
        <position position="65"/>
    </location>
</feature>
<feature type="sequence conflict" description="In Ref. 5; AAM65023." evidence="5" ref="5">
    <original>S</original>
    <variation>T</variation>
    <location>
        <position position="165"/>
    </location>
</feature>
<feature type="sequence conflict" description="In Ref. 6; AF488603." evidence="5" ref="6">
    <original>F</original>
    <variation>L</variation>
    <location>
        <position position="314"/>
    </location>
</feature>
<accession>Q56XR0</accession>
<accession>Q8LB18</accession>
<accession>Q9FIQ6</accession>
<protein>
    <recommendedName>
        <fullName>Transcription factor bHLH71</fullName>
    </recommendedName>
    <alternativeName>
        <fullName>Basic helix-loop-helix protein 71</fullName>
        <shortName>AtbHLH71</shortName>
        <shortName>bHLH 71</shortName>
    </alternativeName>
    <alternativeName>
        <fullName>Transcription factor EN 17</fullName>
    </alternativeName>
    <alternativeName>
        <fullName>bHLH transcription factor bHLH071</fullName>
    </alternativeName>
</protein>
<dbReference type="EMBL" id="AB016882">
    <property type="protein sequence ID" value="BAB08913.1"/>
    <property type="status" value="ALT_SEQ"/>
    <property type="molecule type" value="Genomic_DNA"/>
</dbReference>
<dbReference type="EMBL" id="CP002688">
    <property type="protein sequence ID" value="AED95414.1"/>
    <property type="molecule type" value="Genomic_DNA"/>
</dbReference>
<dbReference type="EMBL" id="AK221613">
    <property type="protein sequence ID" value="BAD95200.1"/>
    <property type="molecule type" value="mRNA"/>
</dbReference>
<dbReference type="EMBL" id="BT025663">
    <property type="protein sequence ID" value="ABF74724.1"/>
    <property type="molecule type" value="mRNA"/>
</dbReference>
<dbReference type="EMBL" id="AY087479">
    <property type="protein sequence ID" value="AAM65023.1"/>
    <property type="molecule type" value="mRNA"/>
</dbReference>
<dbReference type="EMBL" id="AF488603">
    <property type="status" value="NOT_ANNOTATED_CDS"/>
    <property type="molecule type" value="mRNA"/>
</dbReference>
<dbReference type="RefSeq" id="NP_001331893.1">
    <property type="nucleotide sequence ID" value="NM_001344694.1"/>
</dbReference>
<dbReference type="RefSeq" id="NP_568666.1">
    <property type="nucleotide sequence ID" value="NM_124039.3"/>
</dbReference>
<dbReference type="SMR" id="Q56XR0"/>
<dbReference type="BioGRID" id="19960">
    <property type="interactions" value="7"/>
</dbReference>
<dbReference type="FunCoup" id="Q56XR0">
    <property type="interactions" value="106"/>
</dbReference>
<dbReference type="IntAct" id="Q56XR0">
    <property type="interactions" value="7"/>
</dbReference>
<dbReference type="STRING" id="3702.Q56XR0"/>
<dbReference type="PaxDb" id="3702-AT5G46690.1"/>
<dbReference type="EnsemblPlants" id="AT5G46690.1">
    <property type="protein sequence ID" value="AT5G46690.1"/>
    <property type="gene ID" value="AT5G46690"/>
</dbReference>
<dbReference type="GeneID" id="834712"/>
<dbReference type="Gramene" id="AT5G46690.1">
    <property type="protein sequence ID" value="AT5G46690.1"/>
    <property type="gene ID" value="AT5G46690"/>
</dbReference>
<dbReference type="KEGG" id="ath:AT5G46690"/>
<dbReference type="Araport" id="AT5G46690"/>
<dbReference type="TAIR" id="AT5G46690">
    <property type="gene designation" value="BHLH071"/>
</dbReference>
<dbReference type="eggNOG" id="ENOG502QTSP">
    <property type="taxonomic scope" value="Eukaryota"/>
</dbReference>
<dbReference type="HOGENOM" id="CLU_044652_4_0_1"/>
<dbReference type="InParanoid" id="Q56XR0"/>
<dbReference type="OMA" id="CMESTTT"/>
<dbReference type="PhylomeDB" id="Q56XR0"/>
<dbReference type="PRO" id="PR:Q56XR0"/>
<dbReference type="Proteomes" id="UP000006548">
    <property type="component" value="Chromosome 5"/>
</dbReference>
<dbReference type="ExpressionAtlas" id="Q56XR0">
    <property type="expression patterns" value="baseline and differential"/>
</dbReference>
<dbReference type="GO" id="GO:0005634">
    <property type="term" value="C:nucleus"/>
    <property type="evidence" value="ECO:0007669"/>
    <property type="project" value="UniProtKB-SubCell"/>
</dbReference>
<dbReference type="GO" id="GO:0003677">
    <property type="term" value="F:DNA binding"/>
    <property type="evidence" value="ECO:0007669"/>
    <property type="project" value="UniProtKB-KW"/>
</dbReference>
<dbReference type="GO" id="GO:0003700">
    <property type="term" value="F:DNA-binding transcription factor activity"/>
    <property type="evidence" value="ECO:0000250"/>
    <property type="project" value="TAIR"/>
</dbReference>
<dbReference type="GO" id="GO:0046983">
    <property type="term" value="F:protein dimerization activity"/>
    <property type="evidence" value="ECO:0007669"/>
    <property type="project" value="InterPro"/>
</dbReference>
<dbReference type="GO" id="GO:0006355">
    <property type="term" value="P:regulation of DNA-templated transcription"/>
    <property type="evidence" value="ECO:0000304"/>
    <property type="project" value="TAIR"/>
</dbReference>
<dbReference type="CDD" id="cd11448">
    <property type="entry name" value="bHLH_AtFAMA_like"/>
    <property type="match status" value="1"/>
</dbReference>
<dbReference type="Gene3D" id="4.10.280.10">
    <property type="entry name" value="Helix-loop-helix DNA-binding domain"/>
    <property type="match status" value="1"/>
</dbReference>
<dbReference type="InterPro" id="IPR011598">
    <property type="entry name" value="bHLH_dom"/>
</dbReference>
<dbReference type="InterPro" id="IPR036638">
    <property type="entry name" value="HLH_DNA-bd_sf"/>
</dbReference>
<dbReference type="PANTHER" id="PTHR11969">
    <property type="entry name" value="MAX DIMERIZATION, MAD"/>
    <property type="match status" value="1"/>
</dbReference>
<dbReference type="PANTHER" id="PTHR11969:SF86">
    <property type="entry name" value="TRANSCRIPTION FACTOR BHLH71"/>
    <property type="match status" value="1"/>
</dbReference>
<dbReference type="Pfam" id="PF00010">
    <property type="entry name" value="HLH"/>
    <property type="match status" value="1"/>
</dbReference>
<dbReference type="SMART" id="SM00353">
    <property type="entry name" value="HLH"/>
    <property type="match status" value="1"/>
</dbReference>
<dbReference type="SUPFAM" id="SSF47459">
    <property type="entry name" value="HLH, helix-loop-helix DNA-binding domain"/>
    <property type="match status" value="1"/>
</dbReference>
<dbReference type="PROSITE" id="PS50888">
    <property type="entry name" value="BHLH"/>
    <property type="match status" value="1"/>
</dbReference>
<sequence>MTLEALSSNGLLNFLLSETLSPTPFKSLVDLEPLPENDVIISKNTISEISNQEPPPQRQPPATNRGKKRRRRKPRVCKNEEEAENQRMTHIAVERNRRRQMNQHLSVLRSLMPQPFAHKGDQASIVGGAIDFIKELEHKLLSLEAQKHHNAKLNQSVTSSTSQDSNGEQENPHQPSSLSLSQFFLHSYDPSQENRNGSTSSVKTPMEDLEVTLIETHANIRILSRRRGFRWSTLATTKPPQLSKLVASLQSLSLSILHLSVTTLDNYAIYSISAKVEESCQLSSVDDIAGAVHHMLSIIEEEPFCCSSMSELPFDFSLNHSNVTHSL</sequence>